<reference key="1">
    <citation type="journal article" date="1987" name="J. Gen. Virol.">
        <title>The complete nucleotide sequence of tobacco rattle virus RNA-1.</title>
        <authorList>
            <person name="Hamilton W.D.O."/>
            <person name="Boccara M."/>
            <person name="Robinson D.J."/>
            <person name="Baulcombe D.C."/>
        </authorList>
    </citation>
    <scope>NUCLEOTIDE SEQUENCE [GENOMIC RNA]</scope>
</reference>
<reference key="2">
    <citation type="journal article" date="1986" name="EMBO J.">
        <title>The organisation and interviral homologies of genes at the 3' end of tobacco rattle virus RNA1.</title>
        <authorList>
            <person name="Boccara M."/>
            <person name="Hamilton W.D.O."/>
            <person name="Baulcombe D.C."/>
        </authorList>
    </citation>
    <scope>NUCLEOTIDE SEQUENCE [GENOMIC RNA]</scope>
</reference>
<dbReference type="EMBL" id="X06172">
    <property type="protein sequence ID" value="CAA29539.1"/>
    <property type="molecule type" value="Genomic_RNA"/>
</dbReference>
<dbReference type="EMBL" id="D00155">
    <property type="protein sequence ID" value="BAA00113.1"/>
    <property type="molecule type" value="Genomic_RNA"/>
</dbReference>
<dbReference type="PIR" id="S01866">
    <property type="entry name" value="S01866"/>
</dbReference>
<dbReference type="RefSeq" id="NP_620672.1">
    <property type="nucleotide sequence ID" value="NC_003805.1"/>
</dbReference>
<dbReference type="SMR" id="P05077"/>
<dbReference type="GeneID" id="962132"/>
<dbReference type="KEGG" id="vg:962132"/>
<dbReference type="InterPro" id="IPR007968">
    <property type="entry name" value="Tobacco_rattle_virus_16kDa"/>
</dbReference>
<dbReference type="Pfam" id="PF05304">
    <property type="entry name" value="DUF728"/>
    <property type="match status" value="1"/>
</dbReference>
<protein>
    <recommendedName>
        <fullName>16 kDa protein</fullName>
    </recommendedName>
</protein>
<organismHost>
    <name type="scientific">Beta vulgaris</name>
    <name type="common">Sugar beet</name>
    <dbReference type="NCBI Taxonomy" id="161934"/>
</organismHost>
<organismHost>
    <name type="scientific">Capsicum annuum</name>
    <name type="common">Capsicum pepper</name>
    <dbReference type="NCBI Taxonomy" id="4072"/>
</organismHost>
<organismHost>
    <name type="scientific">Hyacinthus</name>
    <dbReference type="NCBI Taxonomy" id="82024"/>
</organismHost>
<organismHost>
    <name type="scientific">Narcissus pseudonarcissus</name>
    <name type="common">Daffodil</name>
    <dbReference type="NCBI Taxonomy" id="39639"/>
</organismHost>
<organismHost>
    <name type="scientific">Nicotiana tabacum</name>
    <name type="common">Common tobacco</name>
    <dbReference type="NCBI Taxonomy" id="4097"/>
</organismHost>
<organismHost>
    <name type="scientific">Solanum tuberosum</name>
    <name type="common">Potato</name>
    <dbReference type="NCBI Taxonomy" id="4113"/>
</organismHost>
<organismHost>
    <name type="scientific">Spinacia oleracea</name>
    <name type="common">Spinach</name>
    <dbReference type="NCBI Taxonomy" id="3562"/>
</organismHost>
<organismHost>
    <name type="scientific">Stellaria media</name>
    <name type="common">Common chickweed</name>
    <name type="synonym">Alsine media</name>
    <dbReference type="NCBI Taxonomy" id="13274"/>
</organismHost>
<organismHost>
    <name type="scientific">Tulipa</name>
    <dbReference type="NCBI Taxonomy" id="13305"/>
</organismHost>
<organismHost>
    <name type="scientific">Viola arvensis</name>
    <name type="common">European field pansy</name>
    <name type="synonym">Field violet</name>
    <dbReference type="NCBI Taxonomy" id="97415"/>
</organismHost>
<feature type="chain" id="PRO_0000222511" description="16 kDa protein">
    <location>
        <begin position="1"/>
        <end position="141"/>
    </location>
</feature>
<feature type="region of interest" description="Disordered" evidence="1">
    <location>
        <begin position="94"/>
        <end position="117"/>
    </location>
</feature>
<feature type="compositionally biased region" description="Basic residues" evidence="1">
    <location>
        <begin position="102"/>
        <end position="113"/>
    </location>
</feature>
<accession>P05077</accession>
<sequence length="141" mass="16337">MTCVLKGCVNEVTVLGHETCSIGHANKLRKQVADMVGVTRRCAENNCGWFVCVVINDFTFDVYNCCGRSHLEKCRKRVETRNREIWKQIRRNQAENMSATAKKSHNSKTSKKKFKEDREFGTPKRFLRDDVPFGIDRLFAF</sequence>
<evidence type="ECO:0000256" key="1">
    <source>
        <dbReference type="SAM" id="MobiDB-lite"/>
    </source>
</evidence>
<proteinExistence type="predicted"/>
<name>V16K_TRVSY</name>
<organism>
    <name type="scientific">Tobacco rattle virus (strain SYM)</name>
    <dbReference type="NCBI Taxonomy" id="12298"/>
    <lineage>
        <taxon>Viruses</taxon>
        <taxon>Riboviria</taxon>
        <taxon>Orthornavirae</taxon>
        <taxon>Kitrinoviricota</taxon>
        <taxon>Alsuviricetes</taxon>
        <taxon>Martellivirales</taxon>
        <taxon>Virgaviridae</taxon>
        <taxon>Tobravirus</taxon>
        <taxon>Tobacco rattle virus</taxon>
    </lineage>
</organism>